<protein>
    <recommendedName>
        <fullName evidence="1">tRNA dimethylallyltransferase</fullName>
        <ecNumber evidence="1">2.5.1.75</ecNumber>
    </recommendedName>
    <alternativeName>
        <fullName evidence="1">Dimethylallyl diphosphate:tRNA dimethylallyltransferase</fullName>
        <shortName evidence="1">DMAPP:tRNA dimethylallyltransferase</shortName>
        <shortName evidence="1">DMATase</shortName>
    </alternativeName>
    <alternativeName>
        <fullName evidence="1">Isopentenyl-diphosphate:tRNA isopentenyltransferase</fullName>
        <shortName evidence="1">IPP transferase</shortName>
        <shortName evidence="1">IPPT</shortName>
        <shortName evidence="1">IPTase</shortName>
    </alternativeName>
</protein>
<sequence length="305" mass="33336">MIPVVCIVGPTGAGKTAASLHLAAVFDGAVINCDSRQVYKDFPVITAQPTLEEQASCPHHLYGFMGIQEKMSAGVFLDMACPIIKEEHAHGRLPLLVGGTGLYLRALLDGIAAIPDIPETVSQKWQERCAARGAPALHRLLEAQDPQTAERLHPNDSQRIVRALEVQEATGRPLSWWHAQPVPPSPYRAVKIGVSATLDGLTPRLAKRIEMMLAAGALDEARNAMGICDNPRAPGWSGIGCAELYSYIKGAVSLDECKRLWLHNTRQYAKRQLTWFRREPNLHWLDGTDMAAMERLVHSVAGSTG</sequence>
<feature type="chain" id="PRO_0000377147" description="tRNA dimethylallyltransferase">
    <location>
        <begin position="1"/>
        <end position="305"/>
    </location>
</feature>
<feature type="region of interest" description="Interaction with substrate tRNA" evidence="1">
    <location>
        <begin position="34"/>
        <end position="37"/>
    </location>
</feature>
<feature type="region of interest" description="Interaction with substrate tRNA" evidence="1">
    <location>
        <begin position="158"/>
        <end position="162"/>
    </location>
</feature>
<feature type="binding site" evidence="1">
    <location>
        <begin position="9"/>
        <end position="16"/>
    </location>
    <ligand>
        <name>ATP</name>
        <dbReference type="ChEBI" id="CHEBI:30616"/>
    </ligand>
</feature>
<feature type="binding site" evidence="1">
    <location>
        <begin position="11"/>
        <end position="16"/>
    </location>
    <ligand>
        <name>substrate</name>
    </ligand>
</feature>
<feature type="site" description="Interaction with substrate tRNA" evidence="1">
    <location>
        <position position="100"/>
    </location>
</feature>
<keyword id="KW-0067">ATP-binding</keyword>
<keyword id="KW-0460">Magnesium</keyword>
<keyword id="KW-0547">Nucleotide-binding</keyword>
<keyword id="KW-1185">Reference proteome</keyword>
<keyword id="KW-0808">Transferase</keyword>
<keyword id="KW-0819">tRNA processing</keyword>
<name>MIAA_OLEA2</name>
<comment type="function">
    <text evidence="1">Catalyzes the transfer of a dimethylallyl group onto the adenine at position 37 in tRNAs that read codons beginning with uridine, leading to the formation of N6-(dimethylallyl)adenosine (i(6)A).</text>
</comment>
<comment type="catalytic activity">
    <reaction evidence="1">
        <text>adenosine(37) in tRNA + dimethylallyl diphosphate = N(6)-dimethylallyladenosine(37) in tRNA + diphosphate</text>
        <dbReference type="Rhea" id="RHEA:26482"/>
        <dbReference type="Rhea" id="RHEA-COMP:10162"/>
        <dbReference type="Rhea" id="RHEA-COMP:10375"/>
        <dbReference type="ChEBI" id="CHEBI:33019"/>
        <dbReference type="ChEBI" id="CHEBI:57623"/>
        <dbReference type="ChEBI" id="CHEBI:74411"/>
        <dbReference type="ChEBI" id="CHEBI:74415"/>
        <dbReference type="EC" id="2.5.1.75"/>
    </reaction>
</comment>
<comment type="cofactor">
    <cofactor evidence="1">
        <name>Mg(2+)</name>
        <dbReference type="ChEBI" id="CHEBI:18420"/>
    </cofactor>
</comment>
<comment type="subunit">
    <text evidence="1">Monomer.</text>
</comment>
<comment type="similarity">
    <text evidence="1">Belongs to the IPP transferase family.</text>
</comment>
<reference key="1">
    <citation type="journal article" date="2011" name="J. Bacteriol.">
        <title>Complete genome sequence and updated annotation of Desulfovibrio alaskensis G20.</title>
        <authorList>
            <person name="Hauser L.J."/>
            <person name="Land M.L."/>
            <person name="Brown S.D."/>
            <person name="Larimer F."/>
            <person name="Keller K.L."/>
            <person name="Rapp-Giles B.J."/>
            <person name="Price M.N."/>
            <person name="Lin M."/>
            <person name="Bruce D.C."/>
            <person name="Detter J.C."/>
            <person name="Tapia R."/>
            <person name="Han C.S."/>
            <person name="Goodwin L.A."/>
            <person name="Cheng J.F."/>
            <person name="Pitluck S."/>
            <person name="Copeland A."/>
            <person name="Lucas S."/>
            <person name="Nolan M."/>
            <person name="Lapidus A.L."/>
            <person name="Palumbo A.V."/>
            <person name="Wall J.D."/>
        </authorList>
    </citation>
    <scope>NUCLEOTIDE SEQUENCE [LARGE SCALE GENOMIC DNA]</scope>
    <source>
        <strain>ATCC BAA-1058 / DSM 17464 / G20</strain>
    </source>
</reference>
<evidence type="ECO:0000255" key="1">
    <source>
        <dbReference type="HAMAP-Rule" id="MF_00185"/>
    </source>
</evidence>
<accession>Q310R5</accession>
<gene>
    <name evidence="1" type="primary">miaA</name>
    <name type="ordered locus">Dde_1784</name>
</gene>
<organism>
    <name type="scientific">Oleidesulfovibrio alaskensis (strain ATCC BAA-1058 / DSM 17464 / G20)</name>
    <name type="common">Desulfovibrio alaskensis</name>
    <dbReference type="NCBI Taxonomy" id="207559"/>
    <lineage>
        <taxon>Bacteria</taxon>
        <taxon>Pseudomonadati</taxon>
        <taxon>Thermodesulfobacteriota</taxon>
        <taxon>Desulfovibrionia</taxon>
        <taxon>Desulfovibrionales</taxon>
        <taxon>Desulfovibrionaceae</taxon>
        <taxon>Oleidesulfovibrio</taxon>
    </lineage>
</organism>
<proteinExistence type="inferred from homology"/>
<dbReference type="EC" id="2.5.1.75" evidence="1"/>
<dbReference type="EMBL" id="CP000112">
    <property type="protein sequence ID" value="ABB38581.2"/>
    <property type="molecule type" value="Genomic_DNA"/>
</dbReference>
<dbReference type="SMR" id="Q310R5"/>
<dbReference type="STRING" id="207559.Dde_1784"/>
<dbReference type="KEGG" id="dde:Dde_1784"/>
<dbReference type="eggNOG" id="COG0324">
    <property type="taxonomic scope" value="Bacteria"/>
</dbReference>
<dbReference type="HOGENOM" id="CLU_032616_0_1_7"/>
<dbReference type="Proteomes" id="UP000002710">
    <property type="component" value="Chromosome"/>
</dbReference>
<dbReference type="GO" id="GO:0005524">
    <property type="term" value="F:ATP binding"/>
    <property type="evidence" value="ECO:0007669"/>
    <property type="project" value="UniProtKB-UniRule"/>
</dbReference>
<dbReference type="GO" id="GO:0052381">
    <property type="term" value="F:tRNA dimethylallyltransferase activity"/>
    <property type="evidence" value="ECO:0007669"/>
    <property type="project" value="UniProtKB-UniRule"/>
</dbReference>
<dbReference type="GO" id="GO:0006400">
    <property type="term" value="P:tRNA modification"/>
    <property type="evidence" value="ECO:0007669"/>
    <property type="project" value="TreeGrafter"/>
</dbReference>
<dbReference type="FunFam" id="1.10.20.140:FF:000001">
    <property type="entry name" value="tRNA dimethylallyltransferase"/>
    <property type="match status" value="1"/>
</dbReference>
<dbReference type="Gene3D" id="1.10.20.140">
    <property type="match status" value="1"/>
</dbReference>
<dbReference type="Gene3D" id="3.40.50.300">
    <property type="entry name" value="P-loop containing nucleotide triphosphate hydrolases"/>
    <property type="match status" value="1"/>
</dbReference>
<dbReference type="HAMAP" id="MF_00185">
    <property type="entry name" value="IPP_trans"/>
    <property type="match status" value="1"/>
</dbReference>
<dbReference type="InterPro" id="IPR039657">
    <property type="entry name" value="Dimethylallyltransferase"/>
</dbReference>
<dbReference type="InterPro" id="IPR018022">
    <property type="entry name" value="IPT"/>
</dbReference>
<dbReference type="InterPro" id="IPR027417">
    <property type="entry name" value="P-loop_NTPase"/>
</dbReference>
<dbReference type="NCBIfam" id="TIGR00174">
    <property type="entry name" value="miaA"/>
    <property type="match status" value="1"/>
</dbReference>
<dbReference type="PANTHER" id="PTHR11088">
    <property type="entry name" value="TRNA DIMETHYLALLYLTRANSFERASE"/>
    <property type="match status" value="1"/>
</dbReference>
<dbReference type="PANTHER" id="PTHR11088:SF60">
    <property type="entry name" value="TRNA DIMETHYLALLYLTRANSFERASE"/>
    <property type="match status" value="1"/>
</dbReference>
<dbReference type="Pfam" id="PF01715">
    <property type="entry name" value="IPPT"/>
    <property type="match status" value="1"/>
</dbReference>
<dbReference type="SUPFAM" id="SSF52540">
    <property type="entry name" value="P-loop containing nucleoside triphosphate hydrolases"/>
    <property type="match status" value="1"/>
</dbReference>